<proteinExistence type="inferred from homology"/>
<keyword id="KW-1015">Disulfide bond</keyword>
<keyword id="KW-0528">Neurotoxin</keyword>
<keyword id="KW-0629">Postsynaptic neurotoxin</keyword>
<keyword id="KW-0964">Secreted</keyword>
<keyword id="KW-0732">Signal</keyword>
<keyword id="KW-0800">Toxin</keyword>
<protein>
    <recommendedName>
        <fullName>U4-theraphotoxin-Hhn1o</fullName>
        <shortName>U4-TRTX-Hhn1o</shortName>
    </recommendedName>
    <alternativeName>
        <fullName>Hainantoxin-II-23</fullName>
        <shortName>HNTX-II-23</shortName>
    </alternativeName>
</protein>
<reference key="1">
    <citation type="journal article" date="2010" name="J. Proteome Res.">
        <title>Molecular diversification of peptide toxins from the tarantula Haplopelma hainanum (Ornithoctonus hainana) venom based on transcriptomic, peptidomic, and genomic analyses.</title>
        <authorList>
            <person name="Tang X."/>
            <person name="Zhang Y."/>
            <person name="Hu W."/>
            <person name="Xu D."/>
            <person name="Tao H."/>
            <person name="Yang X."/>
            <person name="Li Y."/>
            <person name="Jiang L."/>
            <person name="Liang S."/>
        </authorList>
    </citation>
    <scope>NUCLEOTIDE SEQUENCE [LARGE SCALE GENOMIC DNA]</scope>
    <source>
        <tissue>Venom gland</tissue>
    </source>
</reference>
<accession>D2Y2J6</accession>
<name>H2W01_CYRHA</name>
<organism>
    <name type="scientific">Cyriopagopus hainanus</name>
    <name type="common">Chinese bird spider</name>
    <name type="synonym">Haplopelma hainanum</name>
    <dbReference type="NCBI Taxonomy" id="209901"/>
    <lineage>
        <taxon>Eukaryota</taxon>
        <taxon>Metazoa</taxon>
        <taxon>Ecdysozoa</taxon>
        <taxon>Arthropoda</taxon>
        <taxon>Chelicerata</taxon>
        <taxon>Arachnida</taxon>
        <taxon>Araneae</taxon>
        <taxon>Mygalomorphae</taxon>
        <taxon>Theraphosidae</taxon>
        <taxon>Haplopelma</taxon>
    </lineage>
</organism>
<dbReference type="EMBL" id="GU293073">
    <property type="protein sequence ID" value="ADB56889.1"/>
    <property type="molecule type" value="Genomic_DNA"/>
</dbReference>
<dbReference type="SMR" id="D2Y2J6"/>
<dbReference type="ArachnoServer" id="AS001556">
    <property type="toxin name" value="U4-theraphotoxin-Hhn1o"/>
</dbReference>
<dbReference type="GO" id="GO:0005576">
    <property type="term" value="C:extracellular region"/>
    <property type="evidence" value="ECO:0007669"/>
    <property type="project" value="UniProtKB-SubCell"/>
</dbReference>
<dbReference type="GO" id="GO:0035792">
    <property type="term" value="C:host cell postsynaptic membrane"/>
    <property type="evidence" value="ECO:0007669"/>
    <property type="project" value="UniProtKB-KW"/>
</dbReference>
<dbReference type="GO" id="GO:0090729">
    <property type="term" value="F:toxin activity"/>
    <property type="evidence" value="ECO:0007669"/>
    <property type="project" value="UniProtKB-KW"/>
</dbReference>
<dbReference type="InterPro" id="IPR012625">
    <property type="entry name" value="Hwtx-2-like"/>
</dbReference>
<dbReference type="Pfam" id="PF08089">
    <property type="entry name" value="Toxin_20"/>
    <property type="match status" value="1"/>
</dbReference>
<dbReference type="SUPFAM" id="SSF57059">
    <property type="entry name" value="omega toxin-like"/>
    <property type="match status" value="1"/>
</dbReference>
<dbReference type="PROSITE" id="PS60022">
    <property type="entry name" value="HWTX_2"/>
    <property type="match status" value="1"/>
</dbReference>
<evidence type="ECO:0000250" key="1"/>
<evidence type="ECO:0000255" key="2"/>
<evidence type="ECO:0000305" key="3"/>
<feature type="signal peptide" evidence="2">
    <location>
        <begin position="1"/>
        <end position="22"/>
    </location>
</feature>
<feature type="propeptide" id="PRO_0000400813" evidence="1">
    <location>
        <begin position="23"/>
        <end position="48"/>
    </location>
</feature>
<feature type="peptide" id="PRO_0000400814" description="U4-theraphotoxin-Hhn1o">
    <location>
        <begin position="49"/>
        <end position="85"/>
    </location>
</feature>
<feature type="disulfide bond" evidence="1">
    <location>
        <begin position="52"/>
        <end position="66"/>
    </location>
</feature>
<feature type="disulfide bond" evidence="1">
    <location>
        <begin position="56"/>
        <end position="77"/>
    </location>
</feature>
<feature type="disulfide bond" evidence="1">
    <location>
        <begin position="71"/>
        <end position="82"/>
    </location>
</feature>
<comment type="function">
    <text evidence="1">Postsynaptic neurotoxin.</text>
</comment>
<comment type="subcellular location">
    <subcellularLocation>
        <location evidence="1">Secreted</location>
    </subcellularLocation>
</comment>
<comment type="tissue specificity">
    <text>Expressed by the venom gland.</text>
</comment>
<comment type="similarity">
    <text evidence="3">Belongs to the neurotoxin 12 (Hwtx-2) family. 02 (Hwtx-2) subfamily.</text>
</comment>
<sequence>MKVTLIAILTCAAVLVLHTTAAEELEAESQLMEVGMPDTELAAVDEERHFECSVSCEIEKEGNKDCKKKKCKGGWKCKFNMCVKV</sequence>